<protein>
    <recommendedName>
        <fullName evidence="1">3-dehydroquinate dehydratase</fullName>
        <shortName evidence="1">3-dehydroquinase</shortName>
        <ecNumber evidence="1">4.2.1.10</ecNumber>
    </recommendedName>
    <alternativeName>
        <fullName evidence="1">Type I DHQase</fullName>
    </alternativeName>
    <alternativeName>
        <fullName evidence="1">Type I dehydroquinase</fullName>
        <shortName evidence="1">DHQ1</shortName>
    </alternativeName>
</protein>
<keyword id="KW-0028">Amino-acid biosynthesis</keyword>
<keyword id="KW-0057">Aromatic amino acid biosynthesis</keyword>
<keyword id="KW-0456">Lyase</keyword>
<keyword id="KW-0704">Schiff base</keyword>
<dbReference type="EC" id="4.2.1.10" evidence="1"/>
<dbReference type="EMBL" id="CP000921">
    <property type="protein sequence ID" value="ACO23595.1"/>
    <property type="molecule type" value="Genomic_DNA"/>
</dbReference>
<dbReference type="RefSeq" id="WP_000767762.1">
    <property type="nucleotide sequence ID" value="NC_012469.1"/>
</dbReference>
<dbReference type="SMR" id="C1CQX8"/>
<dbReference type="GeneID" id="45653363"/>
<dbReference type="KEGG" id="snt:SPT_0896"/>
<dbReference type="HOGENOM" id="CLU_064444_0_0_9"/>
<dbReference type="UniPathway" id="UPA00053">
    <property type="reaction ID" value="UER00086"/>
</dbReference>
<dbReference type="GO" id="GO:0003855">
    <property type="term" value="F:3-dehydroquinate dehydratase activity"/>
    <property type="evidence" value="ECO:0007669"/>
    <property type="project" value="UniProtKB-UniRule"/>
</dbReference>
<dbReference type="GO" id="GO:0046279">
    <property type="term" value="P:3,4-dihydroxybenzoate biosynthetic process"/>
    <property type="evidence" value="ECO:0007669"/>
    <property type="project" value="UniProtKB-ARBA"/>
</dbReference>
<dbReference type="GO" id="GO:0008652">
    <property type="term" value="P:amino acid biosynthetic process"/>
    <property type="evidence" value="ECO:0007669"/>
    <property type="project" value="UniProtKB-KW"/>
</dbReference>
<dbReference type="GO" id="GO:0009073">
    <property type="term" value="P:aromatic amino acid family biosynthetic process"/>
    <property type="evidence" value="ECO:0007669"/>
    <property type="project" value="UniProtKB-KW"/>
</dbReference>
<dbReference type="GO" id="GO:0009423">
    <property type="term" value="P:chorismate biosynthetic process"/>
    <property type="evidence" value="ECO:0007669"/>
    <property type="project" value="UniProtKB-UniRule"/>
</dbReference>
<dbReference type="CDD" id="cd00502">
    <property type="entry name" value="DHQase_I"/>
    <property type="match status" value="1"/>
</dbReference>
<dbReference type="FunFam" id="3.20.20.70:FF:000217">
    <property type="entry name" value="3-dehydroquinate dehydratase"/>
    <property type="match status" value="1"/>
</dbReference>
<dbReference type="Gene3D" id="3.20.20.70">
    <property type="entry name" value="Aldolase class I"/>
    <property type="match status" value="1"/>
</dbReference>
<dbReference type="HAMAP" id="MF_00214">
    <property type="entry name" value="AroD"/>
    <property type="match status" value="1"/>
</dbReference>
<dbReference type="InterPro" id="IPR013785">
    <property type="entry name" value="Aldolase_TIM"/>
</dbReference>
<dbReference type="InterPro" id="IPR001381">
    <property type="entry name" value="DHquinase_I"/>
</dbReference>
<dbReference type="InterPro" id="IPR050146">
    <property type="entry name" value="Type-I_3-dehydroquinase"/>
</dbReference>
<dbReference type="NCBIfam" id="TIGR01093">
    <property type="entry name" value="aroD"/>
    <property type="match status" value="1"/>
</dbReference>
<dbReference type="PANTHER" id="PTHR43699">
    <property type="entry name" value="3-DEHYDROQUINATE DEHYDRATASE"/>
    <property type="match status" value="1"/>
</dbReference>
<dbReference type="PANTHER" id="PTHR43699:SF1">
    <property type="entry name" value="3-DEHYDROQUINATE DEHYDRATASE"/>
    <property type="match status" value="1"/>
</dbReference>
<dbReference type="Pfam" id="PF01487">
    <property type="entry name" value="DHquinase_I"/>
    <property type="match status" value="1"/>
</dbReference>
<dbReference type="SUPFAM" id="SSF51569">
    <property type="entry name" value="Aldolase"/>
    <property type="match status" value="1"/>
</dbReference>
<reference key="1">
    <citation type="journal article" date="2010" name="Genome Biol.">
        <title>Structure and dynamics of the pan-genome of Streptococcus pneumoniae and closely related species.</title>
        <authorList>
            <person name="Donati C."/>
            <person name="Hiller N.L."/>
            <person name="Tettelin H."/>
            <person name="Muzzi A."/>
            <person name="Croucher N.J."/>
            <person name="Angiuoli S.V."/>
            <person name="Oggioni M."/>
            <person name="Dunning Hotopp J.C."/>
            <person name="Hu F.Z."/>
            <person name="Riley D.R."/>
            <person name="Covacci A."/>
            <person name="Mitchell T.J."/>
            <person name="Bentley S.D."/>
            <person name="Kilian M."/>
            <person name="Ehrlich G.D."/>
            <person name="Rappuoli R."/>
            <person name="Moxon E.R."/>
            <person name="Masignani V."/>
        </authorList>
    </citation>
    <scope>NUCLEOTIDE SEQUENCE [LARGE SCALE GENOMIC DNA]</scope>
    <source>
        <strain>Taiwan19F-14</strain>
    </source>
</reference>
<proteinExistence type="inferred from homology"/>
<name>AROD_STRZT</name>
<gene>
    <name evidence="1" type="primary">aroD</name>
    <name type="ordered locus">SPT_0896</name>
</gene>
<sequence>MKLIVSVMPRSLEEAQALDATRYLDADIIEWRADYLPKEAILQVAPAIFEKFAGRELVFTLRTRSEGGEIDLSPEEYIHLIKEVAQLYQPDYIDFEYYSYKDVFEEMLDFPNLVLSYHNFQETPENMMEILSELTILNPKLVKVAVMAHTEQDVLDLMNYTRGFKTLNPEQEYVTISMGKVGKVSRITADVTGSSWSFASLDEVSAPGQISLASMKKIREILDEA</sequence>
<comment type="function">
    <text evidence="1">Involved in the third step of the chorismate pathway, which leads to the biosynthesis of aromatic amino acids. Catalyzes the cis-dehydration of 3-dehydroquinate (DHQ) and introduces the first double bond of the aromatic ring to yield 3-dehydroshikimate.</text>
</comment>
<comment type="catalytic activity">
    <reaction evidence="1">
        <text>3-dehydroquinate = 3-dehydroshikimate + H2O</text>
        <dbReference type="Rhea" id="RHEA:21096"/>
        <dbReference type="ChEBI" id="CHEBI:15377"/>
        <dbReference type="ChEBI" id="CHEBI:16630"/>
        <dbReference type="ChEBI" id="CHEBI:32364"/>
        <dbReference type="EC" id="4.2.1.10"/>
    </reaction>
</comment>
<comment type="pathway">
    <text evidence="1">Metabolic intermediate biosynthesis; chorismate biosynthesis; chorismate from D-erythrose 4-phosphate and phosphoenolpyruvate: step 3/7.</text>
</comment>
<comment type="subunit">
    <text evidence="1">Homodimer.</text>
</comment>
<comment type="similarity">
    <text evidence="1">Belongs to the type-I 3-dehydroquinase family.</text>
</comment>
<organism>
    <name type="scientific">Streptococcus pneumoniae (strain Taiwan19F-14)</name>
    <dbReference type="NCBI Taxonomy" id="487213"/>
    <lineage>
        <taxon>Bacteria</taxon>
        <taxon>Bacillati</taxon>
        <taxon>Bacillota</taxon>
        <taxon>Bacilli</taxon>
        <taxon>Lactobacillales</taxon>
        <taxon>Streptococcaceae</taxon>
        <taxon>Streptococcus</taxon>
    </lineage>
</organism>
<feature type="chain" id="PRO_1000124791" description="3-dehydroquinate dehydratase">
    <location>
        <begin position="1"/>
        <end position="225"/>
    </location>
</feature>
<feature type="active site" description="Proton donor/acceptor" evidence="1">
    <location>
        <position position="118"/>
    </location>
</feature>
<feature type="active site" description="Schiff-base intermediate with substrate" evidence="1">
    <location>
        <position position="143"/>
    </location>
</feature>
<feature type="binding site" evidence="1">
    <location>
        <position position="6"/>
    </location>
    <ligand>
        <name>3-dehydroquinate</name>
        <dbReference type="ChEBI" id="CHEBI:32364"/>
    </ligand>
</feature>
<feature type="binding site" evidence="1">
    <location>
        <begin position="30"/>
        <end position="32"/>
    </location>
    <ligand>
        <name>3-dehydroquinate</name>
        <dbReference type="ChEBI" id="CHEBI:32364"/>
    </ligand>
</feature>
<feature type="binding site" evidence="1">
    <location>
        <position position="62"/>
    </location>
    <ligand>
        <name>3-dehydroquinate</name>
        <dbReference type="ChEBI" id="CHEBI:32364"/>
    </ligand>
</feature>
<feature type="binding site" evidence="1">
    <location>
        <position position="186"/>
    </location>
    <ligand>
        <name>3-dehydroquinate</name>
        <dbReference type="ChEBI" id="CHEBI:32364"/>
    </ligand>
</feature>
<feature type="binding site" evidence="1">
    <location>
        <position position="205"/>
    </location>
    <ligand>
        <name>3-dehydroquinate</name>
        <dbReference type="ChEBI" id="CHEBI:32364"/>
    </ligand>
</feature>
<feature type="binding site" evidence="1">
    <location>
        <position position="209"/>
    </location>
    <ligand>
        <name>3-dehydroquinate</name>
        <dbReference type="ChEBI" id="CHEBI:32364"/>
    </ligand>
</feature>
<accession>C1CQX8</accession>
<evidence type="ECO:0000255" key="1">
    <source>
        <dbReference type="HAMAP-Rule" id="MF_00214"/>
    </source>
</evidence>